<organism>
    <name type="scientific">Escherichia coli O45:K1 (strain S88 / ExPEC)</name>
    <dbReference type="NCBI Taxonomy" id="585035"/>
    <lineage>
        <taxon>Bacteria</taxon>
        <taxon>Pseudomonadati</taxon>
        <taxon>Pseudomonadota</taxon>
        <taxon>Gammaproteobacteria</taxon>
        <taxon>Enterobacterales</taxon>
        <taxon>Enterobacteriaceae</taxon>
        <taxon>Escherichia</taxon>
    </lineage>
</organism>
<proteinExistence type="inferred from homology"/>
<name>YFBV_ECO45</name>
<reference key="1">
    <citation type="journal article" date="2009" name="PLoS Genet.">
        <title>Organised genome dynamics in the Escherichia coli species results in highly diverse adaptive paths.</title>
        <authorList>
            <person name="Touchon M."/>
            <person name="Hoede C."/>
            <person name="Tenaillon O."/>
            <person name="Barbe V."/>
            <person name="Baeriswyl S."/>
            <person name="Bidet P."/>
            <person name="Bingen E."/>
            <person name="Bonacorsi S."/>
            <person name="Bouchier C."/>
            <person name="Bouvet O."/>
            <person name="Calteau A."/>
            <person name="Chiapello H."/>
            <person name="Clermont O."/>
            <person name="Cruveiller S."/>
            <person name="Danchin A."/>
            <person name="Diard M."/>
            <person name="Dossat C."/>
            <person name="Karoui M.E."/>
            <person name="Frapy E."/>
            <person name="Garry L."/>
            <person name="Ghigo J.M."/>
            <person name="Gilles A.M."/>
            <person name="Johnson J."/>
            <person name="Le Bouguenec C."/>
            <person name="Lescat M."/>
            <person name="Mangenot S."/>
            <person name="Martinez-Jehanne V."/>
            <person name="Matic I."/>
            <person name="Nassif X."/>
            <person name="Oztas S."/>
            <person name="Petit M.A."/>
            <person name="Pichon C."/>
            <person name="Rouy Z."/>
            <person name="Ruf C.S."/>
            <person name="Schneider D."/>
            <person name="Tourret J."/>
            <person name="Vacherie B."/>
            <person name="Vallenet D."/>
            <person name="Medigue C."/>
            <person name="Rocha E.P.C."/>
            <person name="Denamur E."/>
        </authorList>
    </citation>
    <scope>NUCLEOTIDE SEQUENCE [LARGE SCALE GENOMIC DNA]</scope>
    <source>
        <strain>S88 / ExPEC</strain>
    </source>
</reference>
<sequence length="151" mass="17146">MSTPDNRSVNFFSLFRRGQHYSKTWPLEKRLAPVFVENRVIKMTCYAIRFMPPIAVFTLCWQIALGGQLGPAVATALFALSLPMQGLWWLGKRSVTPLPPAILNWFYDVRGKLQESGQVLAPVEGKPDYQALADTLKRAFKQLDKTFLDDL</sequence>
<feature type="chain" id="PRO_1000136984" description="UPF0208 membrane protein YfbV">
    <location>
        <begin position="1"/>
        <end position="151"/>
    </location>
</feature>
<feature type="transmembrane region" description="Helical" evidence="1">
    <location>
        <begin position="46"/>
        <end position="65"/>
    </location>
</feature>
<feature type="transmembrane region" description="Helical" evidence="1">
    <location>
        <begin position="69"/>
        <end position="91"/>
    </location>
</feature>
<dbReference type="EMBL" id="CU928161">
    <property type="protein sequence ID" value="CAR03721.1"/>
    <property type="molecule type" value="Genomic_DNA"/>
</dbReference>
<dbReference type="RefSeq" id="WP_000106620.1">
    <property type="nucleotide sequence ID" value="NC_011742.1"/>
</dbReference>
<dbReference type="KEGG" id="ecz:ECS88_2442"/>
<dbReference type="HOGENOM" id="CLU_128746_0_0_6"/>
<dbReference type="Proteomes" id="UP000000747">
    <property type="component" value="Chromosome"/>
</dbReference>
<dbReference type="GO" id="GO:0005886">
    <property type="term" value="C:plasma membrane"/>
    <property type="evidence" value="ECO:0007669"/>
    <property type="project" value="UniProtKB-SubCell"/>
</dbReference>
<dbReference type="HAMAP" id="MF_01101">
    <property type="entry name" value="UPF0208"/>
    <property type="match status" value="1"/>
</dbReference>
<dbReference type="InterPro" id="IPR007334">
    <property type="entry name" value="UPF0208"/>
</dbReference>
<dbReference type="NCBIfam" id="NF002493">
    <property type="entry name" value="PRK01816.1"/>
    <property type="match status" value="1"/>
</dbReference>
<dbReference type="Pfam" id="PF04217">
    <property type="entry name" value="DUF412"/>
    <property type="match status" value="1"/>
</dbReference>
<evidence type="ECO:0000255" key="1">
    <source>
        <dbReference type="HAMAP-Rule" id="MF_01101"/>
    </source>
</evidence>
<protein>
    <recommendedName>
        <fullName evidence="1">UPF0208 membrane protein YfbV</fullName>
    </recommendedName>
</protein>
<accession>B7MG59</accession>
<keyword id="KW-0997">Cell inner membrane</keyword>
<keyword id="KW-1003">Cell membrane</keyword>
<keyword id="KW-0472">Membrane</keyword>
<keyword id="KW-1185">Reference proteome</keyword>
<keyword id="KW-0812">Transmembrane</keyword>
<keyword id="KW-1133">Transmembrane helix</keyword>
<comment type="subcellular location">
    <subcellularLocation>
        <location evidence="1">Cell inner membrane</location>
        <topology evidence="1">Multi-pass membrane protein</topology>
    </subcellularLocation>
</comment>
<comment type="similarity">
    <text evidence="1">Belongs to the UPF0208 family.</text>
</comment>
<gene>
    <name evidence="1" type="primary">yfbV</name>
    <name type="ordered locus">ECS88_2442</name>
</gene>